<organism>
    <name type="scientific">Methanocaldococcus jannaschii (strain ATCC 43067 / DSM 2661 / JAL-1 / JCM 10045 / NBRC 100440)</name>
    <name type="common">Methanococcus jannaschii</name>
    <dbReference type="NCBI Taxonomy" id="243232"/>
    <lineage>
        <taxon>Archaea</taxon>
        <taxon>Methanobacteriati</taxon>
        <taxon>Methanobacteriota</taxon>
        <taxon>Methanomada group</taxon>
        <taxon>Methanococci</taxon>
        <taxon>Methanococcales</taxon>
        <taxon>Methanocaldococcaceae</taxon>
        <taxon>Methanocaldococcus</taxon>
    </lineage>
</organism>
<evidence type="ECO:0000250" key="1"/>
<evidence type="ECO:0000255" key="2"/>
<evidence type="ECO:0000305" key="3"/>
<name>VAPC3_METJA</name>
<sequence length="94" mass="10719">MDAVIDTSVIIEIFRGNKDTLYQICDYNCKITSITVFELYCGNLKENEMIMIDSLPKLNFDDKSSKIAGNIFKKLKKEGKIPSVKDLLIASIFY</sequence>
<gene>
    <name type="primary">vapC3</name>
    <name type="ordered locus">MJ1121</name>
</gene>
<comment type="function">
    <text evidence="1">Toxic component of a type II toxin-antitoxin (TA) system. An RNase. Its cognate antitoxin is VapB3 (By similarity).</text>
</comment>
<comment type="cofactor">
    <cofactor evidence="3">
        <name>Mg(2+)</name>
        <dbReference type="ChEBI" id="CHEBI:18420"/>
    </cofactor>
</comment>
<comment type="similarity">
    <text evidence="3">Belongs to the PINc/VapC protein family.</text>
</comment>
<keyword id="KW-0378">Hydrolase</keyword>
<keyword id="KW-0460">Magnesium</keyword>
<keyword id="KW-0479">Metal-binding</keyword>
<keyword id="KW-0540">Nuclease</keyword>
<keyword id="KW-1185">Reference proteome</keyword>
<keyword id="KW-1277">Toxin-antitoxin system</keyword>
<dbReference type="EC" id="3.1.-.-"/>
<dbReference type="EMBL" id="L77117">
    <property type="protein sequence ID" value="AAB99123.1"/>
    <property type="molecule type" value="Genomic_DNA"/>
</dbReference>
<dbReference type="PIR" id="H64439">
    <property type="entry name" value="H64439"/>
</dbReference>
<dbReference type="RefSeq" id="WP_010870632.1">
    <property type="nucleotide sequence ID" value="NC_000909.1"/>
</dbReference>
<dbReference type="SMR" id="Q58521"/>
<dbReference type="FunCoup" id="Q58521">
    <property type="interactions" value="1"/>
</dbReference>
<dbReference type="STRING" id="243232.MJ_1121"/>
<dbReference type="PaxDb" id="243232-MJ_1121"/>
<dbReference type="EnsemblBacteria" id="AAB99123">
    <property type="protein sequence ID" value="AAB99123"/>
    <property type="gene ID" value="MJ_1121"/>
</dbReference>
<dbReference type="GeneID" id="1452017"/>
<dbReference type="KEGG" id="mja:MJ_1121"/>
<dbReference type="eggNOG" id="arCOG02219">
    <property type="taxonomic scope" value="Archaea"/>
</dbReference>
<dbReference type="HOGENOM" id="CLU_118482_3_5_2"/>
<dbReference type="InParanoid" id="Q58521"/>
<dbReference type="OrthoDB" id="38049at2157"/>
<dbReference type="PhylomeDB" id="Q58521"/>
<dbReference type="Proteomes" id="UP000000805">
    <property type="component" value="Chromosome"/>
</dbReference>
<dbReference type="GO" id="GO:0046872">
    <property type="term" value="F:metal ion binding"/>
    <property type="evidence" value="ECO:0007669"/>
    <property type="project" value="UniProtKB-KW"/>
</dbReference>
<dbReference type="GO" id="GO:0004540">
    <property type="term" value="F:RNA nuclease activity"/>
    <property type="evidence" value="ECO:0000318"/>
    <property type="project" value="GO_Central"/>
</dbReference>
<dbReference type="CDD" id="cd09881">
    <property type="entry name" value="PIN_VapC4-5_FitB-like"/>
    <property type="match status" value="1"/>
</dbReference>
<dbReference type="FunFam" id="3.40.50.1010:FF:000103">
    <property type="entry name" value="PilT protein domain protein"/>
    <property type="match status" value="1"/>
</dbReference>
<dbReference type="Gene3D" id="3.40.50.1010">
    <property type="entry name" value="5'-nuclease"/>
    <property type="match status" value="1"/>
</dbReference>
<dbReference type="InterPro" id="IPR029060">
    <property type="entry name" value="PIN-like_dom_sf"/>
</dbReference>
<dbReference type="InterPro" id="IPR051749">
    <property type="entry name" value="PINc/VapC_TA_RNase"/>
</dbReference>
<dbReference type="PANTHER" id="PTHR42740">
    <property type="entry name" value="RIBONUCLEASE VAPC3"/>
    <property type="match status" value="1"/>
</dbReference>
<dbReference type="PANTHER" id="PTHR42740:SF1">
    <property type="entry name" value="RIBONUCLEASE VAPC3"/>
    <property type="match status" value="1"/>
</dbReference>
<dbReference type="SUPFAM" id="SSF88723">
    <property type="entry name" value="PIN domain-like"/>
    <property type="match status" value="1"/>
</dbReference>
<accession>Q58521</accession>
<feature type="chain" id="PRO_0000107176" description="Ribonuclease VapC3">
    <location>
        <begin position="1"/>
        <end position="94"/>
    </location>
</feature>
<feature type="binding site" evidence="2">
    <location>
        <position position="6"/>
    </location>
    <ligand>
        <name>Mg(2+)</name>
        <dbReference type="ChEBI" id="CHEBI:18420"/>
    </ligand>
</feature>
<protein>
    <recommendedName>
        <fullName>Ribonuclease VapC3</fullName>
        <shortName>RNase VapC3</shortName>
        <ecNumber>3.1.-.-</ecNumber>
    </recommendedName>
    <alternativeName>
        <fullName>Putative toxin VapC3</fullName>
    </alternativeName>
</protein>
<proteinExistence type="inferred from homology"/>
<reference key="1">
    <citation type="journal article" date="1996" name="Science">
        <title>Complete genome sequence of the methanogenic archaeon, Methanococcus jannaschii.</title>
        <authorList>
            <person name="Bult C.J."/>
            <person name="White O."/>
            <person name="Olsen G.J."/>
            <person name="Zhou L."/>
            <person name="Fleischmann R.D."/>
            <person name="Sutton G.G."/>
            <person name="Blake J.A."/>
            <person name="FitzGerald L.M."/>
            <person name="Clayton R.A."/>
            <person name="Gocayne J.D."/>
            <person name="Kerlavage A.R."/>
            <person name="Dougherty B.A."/>
            <person name="Tomb J.-F."/>
            <person name="Adams M.D."/>
            <person name="Reich C.I."/>
            <person name="Overbeek R."/>
            <person name="Kirkness E.F."/>
            <person name="Weinstock K.G."/>
            <person name="Merrick J.M."/>
            <person name="Glodek A."/>
            <person name="Scott J.L."/>
            <person name="Geoghagen N.S.M."/>
            <person name="Weidman J.F."/>
            <person name="Fuhrmann J.L."/>
            <person name="Nguyen D."/>
            <person name="Utterback T.R."/>
            <person name="Kelley J.M."/>
            <person name="Peterson J.D."/>
            <person name="Sadow P.W."/>
            <person name="Hanna M.C."/>
            <person name="Cotton M.D."/>
            <person name="Roberts K.M."/>
            <person name="Hurst M.A."/>
            <person name="Kaine B.P."/>
            <person name="Borodovsky M."/>
            <person name="Klenk H.-P."/>
            <person name="Fraser C.M."/>
            <person name="Smith H.O."/>
            <person name="Woese C.R."/>
            <person name="Venter J.C."/>
        </authorList>
    </citation>
    <scope>NUCLEOTIDE SEQUENCE [LARGE SCALE GENOMIC DNA]</scope>
    <source>
        <strain>ATCC 43067 / DSM 2661 / JAL-1 / JCM 10045 / NBRC 100440</strain>
    </source>
</reference>
<reference key="2">
    <citation type="journal article" date="2005" name="Nucleic Acids Res.">
        <title>Toxin-antitoxin loci are highly abundant in free-living but lost from host-associated prokaryotes.</title>
        <authorList>
            <person name="Pandey D.P."/>
            <person name="Gerdes K."/>
        </authorList>
    </citation>
    <scope>POSSIBLE FUNCTION</scope>
    <source>
        <strain>ATCC 43067 / DSM 2661 / JAL-1 / JCM 10045 / NBRC 100440</strain>
    </source>
</reference>